<feature type="chain" id="PRO_0000053026" description="Hemoglobin subunit beta-1">
    <location>
        <begin position="1"/>
        <end position="146"/>
    </location>
</feature>
<feature type="domain" description="Globin" evidence="1">
    <location>
        <begin position="2"/>
        <end position="146"/>
    </location>
</feature>
<feature type="binding site" description="distal binding residue">
    <location>
        <position position="63"/>
    </location>
    <ligand>
        <name>heme b</name>
        <dbReference type="ChEBI" id="CHEBI:60344"/>
    </ligand>
    <ligandPart>
        <name>Fe</name>
        <dbReference type="ChEBI" id="CHEBI:18248"/>
    </ligandPart>
</feature>
<feature type="binding site" description="proximal binding residue">
    <location>
        <position position="92"/>
    </location>
    <ligand>
        <name>heme b</name>
        <dbReference type="ChEBI" id="CHEBI:60344"/>
    </ligand>
    <ligandPart>
        <name>Fe</name>
        <dbReference type="ChEBI" id="CHEBI:18248"/>
    </ligandPart>
</feature>
<comment type="function">
    <text>Involved in oxygen transport from gills to the various peripheral tissues.</text>
</comment>
<comment type="subunit">
    <text>Heterotetramer of two alpha chains and two beta chains.</text>
</comment>
<comment type="tissue specificity">
    <text>Red blood cells.</text>
</comment>
<comment type="similarity">
    <text evidence="1">Belongs to the globin family.</text>
</comment>
<proteinExistence type="evidence at protein level"/>
<accession>Q7LZC2</accession>
<sequence length="146" mass="16008">VEWSSNERSTITSLWGKINNAEIGQVALARVLIVYPWTQRYFGQFGDLSSIAAISGNPKVAAHGKVVLDGVEKAVKNLDSIKATYTKLSQLHSDTLNVDPDNFKLLGDCLTIVLSAKFGAEFTPAVQAVWQKFLSCVISALSRQYF</sequence>
<dbReference type="PIR" id="S67981">
    <property type="entry name" value="S67981"/>
</dbReference>
<dbReference type="SMR" id="Q7LZC2"/>
<dbReference type="GO" id="GO:0072562">
    <property type="term" value="C:blood microparticle"/>
    <property type="evidence" value="ECO:0007669"/>
    <property type="project" value="TreeGrafter"/>
</dbReference>
<dbReference type="GO" id="GO:0031838">
    <property type="term" value="C:haptoglobin-hemoglobin complex"/>
    <property type="evidence" value="ECO:0007669"/>
    <property type="project" value="TreeGrafter"/>
</dbReference>
<dbReference type="GO" id="GO:0005833">
    <property type="term" value="C:hemoglobin complex"/>
    <property type="evidence" value="ECO:0007669"/>
    <property type="project" value="InterPro"/>
</dbReference>
<dbReference type="GO" id="GO:0031720">
    <property type="term" value="F:haptoglobin binding"/>
    <property type="evidence" value="ECO:0007669"/>
    <property type="project" value="TreeGrafter"/>
</dbReference>
<dbReference type="GO" id="GO:0020037">
    <property type="term" value="F:heme binding"/>
    <property type="evidence" value="ECO:0007669"/>
    <property type="project" value="InterPro"/>
</dbReference>
<dbReference type="GO" id="GO:0046872">
    <property type="term" value="F:metal ion binding"/>
    <property type="evidence" value="ECO:0007669"/>
    <property type="project" value="UniProtKB-KW"/>
</dbReference>
<dbReference type="GO" id="GO:0043177">
    <property type="term" value="F:organic acid binding"/>
    <property type="evidence" value="ECO:0007669"/>
    <property type="project" value="TreeGrafter"/>
</dbReference>
<dbReference type="GO" id="GO:0019825">
    <property type="term" value="F:oxygen binding"/>
    <property type="evidence" value="ECO:0007669"/>
    <property type="project" value="InterPro"/>
</dbReference>
<dbReference type="GO" id="GO:0005344">
    <property type="term" value="F:oxygen carrier activity"/>
    <property type="evidence" value="ECO:0007669"/>
    <property type="project" value="UniProtKB-KW"/>
</dbReference>
<dbReference type="GO" id="GO:0004601">
    <property type="term" value="F:peroxidase activity"/>
    <property type="evidence" value="ECO:0007669"/>
    <property type="project" value="TreeGrafter"/>
</dbReference>
<dbReference type="GO" id="GO:0042744">
    <property type="term" value="P:hydrogen peroxide catabolic process"/>
    <property type="evidence" value="ECO:0007669"/>
    <property type="project" value="TreeGrafter"/>
</dbReference>
<dbReference type="CDD" id="cd08925">
    <property type="entry name" value="Hb-beta-like"/>
    <property type="match status" value="1"/>
</dbReference>
<dbReference type="FunFam" id="1.10.490.10:FF:000001">
    <property type="entry name" value="Hemoglobin subunit beta"/>
    <property type="match status" value="1"/>
</dbReference>
<dbReference type="Gene3D" id="1.10.490.10">
    <property type="entry name" value="Globins"/>
    <property type="match status" value="1"/>
</dbReference>
<dbReference type="InterPro" id="IPR000971">
    <property type="entry name" value="Globin"/>
</dbReference>
<dbReference type="InterPro" id="IPR009050">
    <property type="entry name" value="Globin-like_sf"/>
</dbReference>
<dbReference type="InterPro" id="IPR012292">
    <property type="entry name" value="Globin/Proto"/>
</dbReference>
<dbReference type="InterPro" id="IPR002337">
    <property type="entry name" value="Hemoglobin_b"/>
</dbReference>
<dbReference type="InterPro" id="IPR050056">
    <property type="entry name" value="Hemoglobin_oxygen_transport"/>
</dbReference>
<dbReference type="PANTHER" id="PTHR11442">
    <property type="entry name" value="HEMOGLOBIN FAMILY MEMBER"/>
    <property type="match status" value="1"/>
</dbReference>
<dbReference type="PANTHER" id="PTHR11442:SF7">
    <property type="entry name" value="HEMOGLOBIN SUBUNIT EPSILON"/>
    <property type="match status" value="1"/>
</dbReference>
<dbReference type="Pfam" id="PF00042">
    <property type="entry name" value="Globin"/>
    <property type="match status" value="1"/>
</dbReference>
<dbReference type="PRINTS" id="PR00814">
    <property type="entry name" value="BETAHAEM"/>
</dbReference>
<dbReference type="SUPFAM" id="SSF46458">
    <property type="entry name" value="Globin-like"/>
    <property type="match status" value="1"/>
</dbReference>
<dbReference type="PROSITE" id="PS01033">
    <property type="entry name" value="GLOBIN"/>
    <property type="match status" value="1"/>
</dbReference>
<gene>
    <name type="primary">hbb1</name>
</gene>
<reference key="1">
    <citation type="journal article" date="1995" name="Eur. J. Biochem.">
        <title>Structure/function relationships in the hemoglobin components from moray (Muraena helena).</title>
        <authorList>
            <person name="Pellegrini M."/>
            <person name="Giardina B."/>
            <person name="Olianas A."/>
            <person name="Sanna M.T."/>
            <person name="Deiana A.M."/>
            <person name="Salvadori S."/>
            <person name="di Prisco G."/>
            <person name="Tamburrini M."/>
            <person name="Corda M."/>
        </authorList>
    </citation>
    <scope>PROTEIN SEQUENCE</scope>
</reference>
<protein>
    <recommendedName>
        <fullName>Hemoglobin subunit beta-1</fullName>
    </recommendedName>
    <alternativeName>
        <fullName>Beta-1-globin</fullName>
    </alternativeName>
    <alternativeName>
        <fullName>Hemoglobin beta-1 chain</fullName>
    </alternativeName>
    <alternativeName>
        <fullName>Hemoglobin beta-I chain</fullName>
    </alternativeName>
</protein>
<organism>
    <name type="scientific">Muraena helena</name>
    <name type="common">Mediterranean moray</name>
    <dbReference type="NCBI Taxonomy" id="46662"/>
    <lineage>
        <taxon>Eukaryota</taxon>
        <taxon>Metazoa</taxon>
        <taxon>Chordata</taxon>
        <taxon>Craniata</taxon>
        <taxon>Vertebrata</taxon>
        <taxon>Euteleostomi</taxon>
        <taxon>Actinopterygii</taxon>
        <taxon>Neopterygii</taxon>
        <taxon>Teleostei</taxon>
        <taxon>Anguilliformes</taxon>
        <taxon>Muraenidae</taxon>
        <taxon>Muraena</taxon>
    </lineage>
</organism>
<evidence type="ECO:0000255" key="1">
    <source>
        <dbReference type="PROSITE-ProRule" id="PRU00238"/>
    </source>
</evidence>
<name>HBB1_MURHE</name>
<keyword id="KW-0903">Direct protein sequencing</keyword>
<keyword id="KW-0349">Heme</keyword>
<keyword id="KW-0408">Iron</keyword>
<keyword id="KW-0479">Metal-binding</keyword>
<keyword id="KW-0561">Oxygen transport</keyword>
<keyword id="KW-0813">Transport</keyword>